<sequence length="742" mass="81546">MKDDFAEEEEVQSFGYKRFGIQEGTQCTKCKNNWALKFSIILLYVLCALLTITVAILGYKVVEKMDTVTDGMETSRQTYDNKLIAVESDLKKLGDQTGKKALSTNSELSTFRSDILDLRQQLQEITEKTSKNKDMLEKLQANGDSLVDRQSQLKETLQNNSFLITTVNKTLQAYNGYVTNLQQDTSVLQGNLQSQMYSQNVVIMNLNNLNLTQVQQRNLITNLQRSVDDTSLAIQQIKNDFQNLQQVFLQAKKDTDWLKEKVQSLQTLAANNSALAKANNDTLEDMNNQLSSFTGQMDNITTISQANEQSMKDLQDLHKDTENRTAVKFSQLEERFQVFETDIVNIINNISYTAHHLRTLTSNLNDVRTTCTDTLTRHTDDLTSLNNTLVNIRLDSISLRMQQDMMRSRLDTEVANLSVVMEEMKLVDSKHGQLIKNFTILQGPPGPRGPKGDRGSQGPPGPTGNKGQKGEKGEPGPPGPAGERGTIGPVGPPGERGSKGSKGSQGPKGSRGSPGKPGPQGPSGDPGPPGPPGKDGLPGPQGPPGFQGLQGTVGEPGVPGPRGLPGLPGVPGMPGPKGPPGPPGPSGAMEPLALQNEPTPASEVNGCPPHWKNFTDKCYYFSVEKEIFEDAKLFCEDKSSHLVFINSREEQQWIKKQTMGRESHWIGLTDSEQESEWKWLDGTPVDYKNWKAGQPDNWGSGHGPGEDCAGLIYAGQWNDFQCDEINNFICEKEREAVPSSIL</sequence>
<feature type="chain" id="PRO_0000318683" description="Collectin-12">
    <location>
        <begin position="1"/>
        <end position="742"/>
    </location>
</feature>
<feature type="topological domain" description="Cytoplasmic" evidence="2">
    <location>
        <begin position="1"/>
        <end position="37"/>
    </location>
</feature>
<feature type="transmembrane region" description="Helical; Signal-anchor for type II membrane protein" evidence="2">
    <location>
        <begin position="38"/>
        <end position="58"/>
    </location>
</feature>
<feature type="topological domain" description="Extracellular" evidence="2">
    <location>
        <begin position="59"/>
        <end position="742"/>
    </location>
</feature>
<feature type="domain" description="Collagen-like 1">
    <location>
        <begin position="452"/>
        <end position="511"/>
    </location>
</feature>
<feature type="domain" description="Collagen-like 2">
    <location>
        <begin position="527"/>
        <end position="586"/>
    </location>
</feature>
<feature type="domain" description="C-type lectin" evidence="3">
    <location>
        <begin position="614"/>
        <end position="731"/>
    </location>
</feature>
<feature type="region of interest" description="Disordered" evidence="4">
    <location>
        <begin position="439"/>
        <end position="608"/>
    </location>
</feature>
<feature type="coiled-coil region" evidence="2">
    <location>
        <begin position="104"/>
        <end position="142"/>
    </location>
</feature>
<feature type="coiled-coil region" evidence="2">
    <location>
        <begin position="220"/>
        <end position="301"/>
    </location>
</feature>
<feature type="compositionally biased region" description="Low complexity" evidence="4">
    <location>
        <begin position="501"/>
        <end position="514"/>
    </location>
</feature>
<feature type="compositionally biased region" description="Pro residues" evidence="4">
    <location>
        <begin position="516"/>
        <end position="532"/>
    </location>
</feature>
<feature type="compositionally biased region" description="Low complexity" evidence="4">
    <location>
        <begin position="534"/>
        <end position="556"/>
    </location>
</feature>
<feature type="compositionally biased region" description="Pro residues" evidence="4">
    <location>
        <begin position="571"/>
        <end position="585"/>
    </location>
</feature>
<feature type="binding site" evidence="1">
    <location>
        <position position="644"/>
    </location>
    <ligand>
        <name>Ca(2+)</name>
        <dbReference type="ChEBI" id="CHEBI:29108"/>
        <label>1</label>
    </ligand>
</feature>
<feature type="binding site" evidence="1">
    <location>
        <position position="646"/>
    </location>
    <ligand>
        <name>Ca(2+)</name>
        <dbReference type="ChEBI" id="CHEBI:29108"/>
        <label>1</label>
    </ligand>
</feature>
<feature type="binding site" evidence="1">
    <location>
        <position position="650"/>
    </location>
    <ligand>
        <name>Ca(2+)</name>
        <dbReference type="ChEBI" id="CHEBI:29108"/>
        <label>1</label>
    </ligand>
</feature>
<feature type="binding site" evidence="1">
    <location>
        <position position="670"/>
    </location>
    <ligand>
        <name>Ca(2+)</name>
        <dbReference type="ChEBI" id="CHEBI:29108"/>
        <label>2</label>
    </ligand>
</feature>
<feature type="binding site" evidence="1">
    <location>
        <position position="674"/>
    </location>
    <ligand>
        <name>Ca(2+)</name>
        <dbReference type="ChEBI" id="CHEBI:29108"/>
        <label>2</label>
    </ligand>
</feature>
<feature type="binding site" evidence="1">
    <location>
        <position position="691"/>
    </location>
    <ligand>
        <name>a carbohydrate</name>
        <dbReference type="ChEBI" id="CHEBI:16646"/>
    </ligand>
</feature>
<feature type="binding site" evidence="1">
    <location>
        <position position="694"/>
    </location>
    <ligand>
        <name>a carbohydrate</name>
        <dbReference type="ChEBI" id="CHEBI:16646"/>
    </ligand>
</feature>
<feature type="binding site" evidence="1">
    <location>
        <position position="694"/>
    </location>
    <ligand>
        <name>Ca(2+)</name>
        <dbReference type="ChEBI" id="CHEBI:29108"/>
        <label>3</label>
    </ligand>
</feature>
<feature type="binding site" evidence="1">
    <location>
        <position position="696"/>
    </location>
    <ligand>
        <name>a carbohydrate</name>
        <dbReference type="ChEBI" id="CHEBI:16646"/>
    </ligand>
</feature>
<feature type="binding site" evidence="1">
    <location>
        <position position="696"/>
    </location>
    <ligand>
        <name>Ca(2+)</name>
        <dbReference type="ChEBI" id="CHEBI:29108"/>
        <label>3</label>
    </ligand>
</feature>
<feature type="binding site" evidence="1">
    <location>
        <position position="697"/>
    </location>
    <ligand>
        <name>Ca(2+)</name>
        <dbReference type="ChEBI" id="CHEBI:29108"/>
        <label>2</label>
    </ligand>
</feature>
<feature type="binding site" evidence="1">
    <location>
        <position position="706"/>
    </location>
    <ligand>
        <name>a carbohydrate</name>
        <dbReference type="ChEBI" id="CHEBI:16646"/>
    </ligand>
</feature>
<feature type="binding site" evidence="1">
    <location>
        <position position="706"/>
    </location>
    <ligand>
        <name>Ca(2+)</name>
        <dbReference type="ChEBI" id="CHEBI:29108"/>
        <label>2</label>
    </ligand>
</feature>
<feature type="binding site" evidence="1">
    <location>
        <position position="706"/>
    </location>
    <ligand>
        <name>Ca(2+)</name>
        <dbReference type="ChEBI" id="CHEBI:29108"/>
        <label>3</label>
    </ligand>
</feature>
<feature type="binding site" evidence="1">
    <location>
        <position position="707"/>
    </location>
    <ligand>
        <name>Ca(2+)</name>
        <dbReference type="ChEBI" id="CHEBI:29108"/>
        <label>2</label>
    </ligand>
</feature>
<feature type="binding site" evidence="1">
    <location>
        <position position="718"/>
    </location>
    <ligand>
        <name>a carbohydrate</name>
        <dbReference type="ChEBI" id="CHEBI:16646"/>
    </ligand>
</feature>
<feature type="binding site" evidence="1">
    <location>
        <position position="718"/>
    </location>
    <ligand>
        <name>Ca(2+)</name>
        <dbReference type="ChEBI" id="CHEBI:29108"/>
        <label>3</label>
    </ligand>
</feature>
<feature type="binding site" evidence="1">
    <location>
        <position position="719"/>
    </location>
    <ligand>
        <name>a carbohydrate</name>
        <dbReference type="ChEBI" id="CHEBI:16646"/>
    </ligand>
</feature>
<feature type="binding site" evidence="1">
    <location>
        <position position="719"/>
    </location>
    <ligand>
        <name>Ca(2+)</name>
        <dbReference type="ChEBI" id="CHEBI:29108"/>
        <label>3</label>
    </ligand>
</feature>
<feature type="binding site" evidence="1">
    <location>
        <position position="731"/>
    </location>
    <ligand>
        <name>Ca(2+)</name>
        <dbReference type="ChEBI" id="CHEBI:29108"/>
        <label>1</label>
    </ligand>
</feature>
<feature type="glycosylation site" description="N-linked (GlcNAc...) asparagine" evidence="2">
    <location>
        <position position="159"/>
    </location>
</feature>
<feature type="glycosylation site" description="N-linked (GlcNAc...) asparagine" evidence="2">
    <location>
        <position position="168"/>
    </location>
</feature>
<feature type="glycosylation site" description="N-linked (GlcNAc...) asparagine" evidence="2">
    <location>
        <position position="271"/>
    </location>
</feature>
<feature type="disulfide bond" evidence="3">
    <location>
        <begin position="607"/>
        <end position="618"/>
    </location>
</feature>
<feature type="disulfide bond" evidence="3">
    <location>
        <begin position="635"/>
        <end position="730"/>
    </location>
</feature>
<feature type="disulfide bond" evidence="3">
    <location>
        <begin position="708"/>
        <end position="722"/>
    </location>
</feature>
<feature type="sequence conflict" description="In Ref. 2; BAD06456." evidence="6" ref="2">
    <original>F</original>
    <variation>S</variation>
    <location>
        <position position="248"/>
    </location>
</feature>
<comment type="function">
    <text evidence="1">Scavenger receptor that displays several functions associated with host defense. Promotes binding and phagocytosis of Gram-positive, Gram-negative bacteria and yeast. Mediates the recognition, internalization and degradation of oxidatively modified low density lipoprotein (oxLDL) by vascular endothelial cells. Binds to several carbohydrates including Gal-type ligands, D-galactose, L- and D-fucose, GalNAc, T and Tn antigens in a calcium-dependent manner and internalizes specifically GalNAc in nurse-like cells. Also binds to sialyl Lewis X or a trisaccharide and asialo-orosomucoid (ASOR) (By similarity).</text>
</comment>
<comment type="subunit">
    <text evidence="1">The extracellular domain forms a stable trimer. The extracellular domain interacts with fibrillar amyloid-beta peptide (By similarity).</text>
</comment>
<comment type="subcellular location">
    <subcellularLocation>
        <location evidence="1">Membrane</location>
        <topology evidence="1">Single-pass type II membrane protein</topology>
    </subcellularLocation>
    <text evidence="1">Forms clusters on the cell surface.</text>
</comment>
<comment type="tissue specificity">
    <text evidence="5">Highly expressed in lung, spleen, small and large intestine, stomach and brain. Expressed in neonatal microglia.</text>
</comment>
<proteinExistence type="evidence at transcript level"/>
<keyword id="KW-0106">Calcium</keyword>
<keyword id="KW-0175">Coiled coil</keyword>
<keyword id="KW-0176">Collagen</keyword>
<keyword id="KW-1015">Disulfide bond</keyword>
<keyword id="KW-0325">Glycoprotein</keyword>
<keyword id="KW-0430">Lectin</keyword>
<keyword id="KW-0472">Membrane</keyword>
<keyword id="KW-0479">Metal-binding</keyword>
<keyword id="KW-0675">Receptor</keyword>
<keyword id="KW-1185">Reference proteome</keyword>
<keyword id="KW-0677">Repeat</keyword>
<keyword id="KW-0735">Signal-anchor</keyword>
<keyword id="KW-0812">Transmembrane</keyword>
<keyword id="KW-1133">Transmembrane helix</keyword>
<evidence type="ECO:0000250" key="1"/>
<evidence type="ECO:0000255" key="2"/>
<evidence type="ECO:0000255" key="3">
    <source>
        <dbReference type="PROSITE-ProRule" id="PRU00040"/>
    </source>
</evidence>
<evidence type="ECO:0000256" key="4">
    <source>
        <dbReference type="SAM" id="MobiDB-lite"/>
    </source>
</evidence>
<evidence type="ECO:0000269" key="5">
    <source>
    </source>
</evidence>
<evidence type="ECO:0000305" key="6"/>
<gene>
    <name type="primary">Colec12</name>
    <name type="synonym">Clp1</name>
    <name type="synonym">Nsr2</name>
</gene>
<protein>
    <recommendedName>
        <fullName>Collectin-12</fullName>
    </recommendedName>
    <alternativeName>
        <fullName>Collectin placenta protein 1</fullName>
        <shortName>CL-P1</shortName>
    </alternativeName>
    <alternativeName>
        <fullName>Nurse cell scavenger receptor 2</fullName>
    </alternativeName>
</protein>
<reference key="1">
    <citation type="journal article" date="2004" name="Genome Res.">
        <title>The status, quality, and expansion of the NIH full-length cDNA project: the Mammalian Gene Collection (MGC).</title>
        <authorList>
            <consortium name="The MGC Project Team"/>
        </authorList>
    </citation>
    <scope>NUCLEOTIDE SEQUENCE [LARGE SCALE MRNA]</scope>
    <source>
        <tissue>Placenta</tissue>
    </source>
</reference>
<reference key="2">
    <citation type="journal article" date="2006" name="J. Neurosci. Res.">
        <title>Possible role of scavenger receptor SRCL in the clearance of amyloid-beta in Alzheimer's disease.</title>
        <authorList>
            <person name="Nakamura K."/>
            <person name="Ohya W."/>
            <person name="Funakoshi H."/>
            <person name="Sakaguchi G."/>
            <person name="Kato A."/>
            <person name="Takeda M."/>
            <person name="Kudo T."/>
            <person name="Nakamura T."/>
        </authorList>
    </citation>
    <scope>NUCLEOTIDE SEQUENCE [LARGE SCALE MRNA] OF 139-356</scope>
    <scope>TISSUE SPECIFICITY</scope>
</reference>
<accession>Q4V885</accession>
<accession>Q76LC3</accession>
<name>COL12_RAT</name>
<dbReference type="EMBL" id="BC097495">
    <property type="protein sequence ID" value="AAH97495.1"/>
    <property type="molecule type" value="mRNA"/>
</dbReference>
<dbReference type="EMBL" id="AB080968">
    <property type="protein sequence ID" value="BAD06456.1"/>
    <property type="molecule type" value="mRNA"/>
</dbReference>
<dbReference type="RefSeq" id="NP_001020892.1">
    <property type="nucleotide sequence ID" value="NM_001025721.1"/>
</dbReference>
<dbReference type="SMR" id="Q4V885"/>
<dbReference type="FunCoup" id="Q4V885">
    <property type="interactions" value="614"/>
</dbReference>
<dbReference type="STRING" id="10116.ENSRNOP00000059663"/>
<dbReference type="GlyCosmos" id="Q4V885">
    <property type="glycosylation" value="3 sites, No reported glycans"/>
</dbReference>
<dbReference type="GlyGen" id="Q4V885">
    <property type="glycosylation" value="4 sites"/>
</dbReference>
<dbReference type="PhosphoSitePlus" id="Q4V885"/>
<dbReference type="SwissPalm" id="Q4V885"/>
<dbReference type="PaxDb" id="10116-ENSRNOP00000059663"/>
<dbReference type="Ensembl" id="ENSRNOT00000065494.2">
    <property type="protein sequence ID" value="ENSRNOP00000059663.1"/>
    <property type="gene ID" value="ENSRNOG00000016366.7"/>
</dbReference>
<dbReference type="GeneID" id="361289"/>
<dbReference type="KEGG" id="rno:361289"/>
<dbReference type="UCSC" id="RGD:735039">
    <property type="organism name" value="rat"/>
</dbReference>
<dbReference type="AGR" id="RGD:735039"/>
<dbReference type="CTD" id="81035"/>
<dbReference type="RGD" id="735039">
    <property type="gene designation" value="Colec12"/>
</dbReference>
<dbReference type="eggNOG" id="ENOG502QQKQ">
    <property type="taxonomic scope" value="Eukaryota"/>
</dbReference>
<dbReference type="GeneTree" id="ENSGT00950000183074"/>
<dbReference type="HOGENOM" id="CLU_022132_0_0_1"/>
<dbReference type="InParanoid" id="Q4V885"/>
<dbReference type="OMA" id="EANKFCK"/>
<dbReference type="OrthoDB" id="9896688at2759"/>
<dbReference type="PhylomeDB" id="Q4V885"/>
<dbReference type="TreeFam" id="TF332426"/>
<dbReference type="PRO" id="PR:Q4V885"/>
<dbReference type="Proteomes" id="UP000002494">
    <property type="component" value="Chromosome 18"/>
</dbReference>
<dbReference type="Bgee" id="ENSRNOG00000016366">
    <property type="expression patterns" value="Expressed in lung and 19 other cell types or tissues"/>
</dbReference>
<dbReference type="GO" id="GO:0005581">
    <property type="term" value="C:collagen trimer"/>
    <property type="evidence" value="ECO:0007669"/>
    <property type="project" value="UniProtKB-KW"/>
</dbReference>
<dbReference type="GO" id="GO:0016020">
    <property type="term" value="C:membrane"/>
    <property type="evidence" value="ECO:0007669"/>
    <property type="project" value="UniProtKB-SubCell"/>
</dbReference>
<dbReference type="GO" id="GO:0030246">
    <property type="term" value="F:carbohydrate binding"/>
    <property type="evidence" value="ECO:0007669"/>
    <property type="project" value="UniProtKB-KW"/>
</dbReference>
<dbReference type="GO" id="GO:0030169">
    <property type="term" value="F:low-density lipoprotein particle binding"/>
    <property type="evidence" value="ECO:0000250"/>
    <property type="project" value="UniProtKB"/>
</dbReference>
<dbReference type="GO" id="GO:0046872">
    <property type="term" value="F:metal ion binding"/>
    <property type="evidence" value="ECO:0007669"/>
    <property type="project" value="UniProtKB-KW"/>
</dbReference>
<dbReference type="GO" id="GO:0038187">
    <property type="term" value="F:pattern recognition receptor activity"/>
    <property type="evidence" value="ECO:0000250"/>
    <property type="project" value="UniProtKB"/>
</dbReference>
<dbReference type="GO" id="GO:0005044">
    <property type="term" value="F:scavenger receptor activity"/>
    <property type="evidence" value="ECO:0000266"/>
    <property type="project" value="RGD"/>
</dbReference>
<dbReference type="GO" id="GO:0038023">
    <property type="term" value="F:signaling receptor activity"/>
    <property type="evidence" value="ECO:0000318"/>
    <property type="project" value="GO_Central"/>
</dbReference>
<dbReference type="GO" id="GO:0071360">
    <property type="term" value="P:cellular response to exogenous dsRNA"/>
    <property type="evidence" value="ECO:0000266"/>
    <property type="project" value="RGD"/>
</dbReference>
<dbReference type="GO" id="GO:0042742">
    <property type="term" value="P:defense response to bacterium"/>
    <property type="evidence" value="ECO:0000266"/>
    <property type="project" value="RGD"/>
</dbReference>
<dbReference type="GO" id="GO:0006955">
    <property type="term" value="P:immune response"/>
    <property type="evidence" value="ECO:0000266"/>
    <property type="project" value="RGD"/>
</dbReference>
<dbReference type="GO" id="GO:0006910">
    <property type="term" value="P:phagocytosis, recognition"/>
    <property type="evidence" value="ECO:0000250"/>
    <property type="project" value="UniProtKB"/>
</dbReference>
<dbReference type="GO" id="GO:0044857">
    <property type="term" value="P:plasma membrane raft organization"/>
    <property type="evidence" value="ECO:0000266"/>
    <property type="project" value="RGD"/>
</dbReference>
<dbReference type="GO" id="GO:0034138">
    <property type="term" value="P:toll-like receptor 3 signaling pathway"/>
    <property type="evidence" value="ECO:0000266"/>
    <property type="project" value="RGD"/>
</dbReference>
<dbReference type="CDD" id="cd03590">
    <property type="entry name" value="CLECT_DC-SIGN_like"/>
    <property type="match status" value="1"/>
</dbReference>
<dbReference type="FunFam" id="3.10.100.10:FF:000017">
    <property type="entry name" value="collectin-12 isoform X1"/>
    <property type="match status" value="1"/>
</dbReference>
<dbReference type="Gene3D" id="3.10.100.10">
    <property type="entry name" value="Mannose-Binding Protein A, subunit A"/>
    <property type="match status" value="1"/>
</dbReference>
<dbReference type="InterPro" id="IPR001304">
    <property type="entry name" value="C-type_lectin-like"/>
</dbReference>
<dbReference type="InterPro" id="IPR016186">
    <property type="entry name" value="C-type_lectin-like/link_sf"/>
</dbReference>
<dbReference type="InterPro" id="IPR050111">
    <property type="entry name" value="C-type_lectin/snaclec_domain"/>
</dbReference>
<dbReference type="InterPro" id="IPR018378">
    <property type="entry name" value="C-type_lectin_CS"/>
</dbReference>
<dbReference type="InterPro" id="IPR033989">
    <property type="entry name" value="CD209-like_CTLD"/>
</dbReference>
<dbReference type="InterPro" id="IPR008160">
    <property type="entry name" value="Collagen"/>
</dbReference>
<dbReference type="InterPro" id="IPR016187">
    <property type="entry name" value="CTDL_fold"/>
</dbReference>
<dbReference type="PANTHER" id="PTHR22803">
    <property type="entry name" value="MANNOSE, PHOSPHOLIPASE, LECTIN RECEPTOR RELATED"/>
    <property type="match status" value="1"/>
</dbReference>
<dbReference type="Pfam" id="PF01391">
    <property type="entry name" value="Collagen"/>
    <property type="match status" value="3"/>
</dbReference>
<dbReference type="Pfam" id="PF00059">
    <property type="entry name" value="Lectin_C"/>
    <property type="match status" value="1"/>
</dbReference>
<dbReference type="SMART" id="SM00034">
    <property type="entry name" value="CLECT"/>
    <property type="match status" value="1"/>
</dbReference>
<dbReference type="SUPFAM" id="SSF56436">
    <property type="entry name" value="C-type lectin-like"/>
    <property type="match status" value="1"/>
</dbReference>
<dbReference type="PROSITE" id="PS00615">
    <property type="entry name" value="C_TYPE_LECTIN_1"/>
    <property type="match status" value="1"/>
</dbReference>
<dbReference type="PROSITE" id="PS50041">
    <property type="entry name" value="C_TYPE_LECTIN_2"/>
    <property type="match status" value="1"/>
</dbReference>
<organism>
    <name type="scientific">Rattus norvegicus</name>
    <name type="common">Rat</name>
    <dbReference type="NCBI Taxonomy" id="10116"/>
    <lineage>
        <taxon>Eukaryota</taxon>
        <taxon>Metazoa</taxon>
        <taxon>Chordata</taxon>
        <taxon>Craniata</taxon>
        <taxon>Vertebrata</taxon>
        <taxon>Euteleostomi</taxon>
        <taxon>Mammalia</taxon>
        <taxon>Eutheria</taxon>
        <taxon>Euarchontoglires</taxon>
        <taxon>Glires</taxon>
        <taxon>Rodentia</taxon>
        <taxon>Myomorpha</taxon>
        <taxon>Muroidea</taxon>
        <taxon>Muridae</taxon>
        <taxon>Murinae</taxon>
        <taxon>Rattus</taxon>
    </lineage>
</organism>